<gene>
    <name evidence="1" type="primary">rplU</name>
    <name type="ordered locus">A1S_2731</name>
</gene>
<protein>
    <recommendedName>
        <fullName evidence="1">Large ribosomal subunit protein bL21</fullName>
    </recommendedName>
    <alternativeName>
        <fullName evidence="2">50S ribosomal protein L21</fullName>
    </alternativeName>
</protein>
<feature type="chain" id="PRO_1000143743" description="Large ribosomal subunit protein bL21">
    <location>
        <begin position="1"/>
        <end position="103"/>
    </location>
</feature>
<name>RL21_ACIBT</name>
<dbReference type="EMBL" id="CP000521">
    <property type="protein sequence ID" value="ABO13144.2"/>
    <property type="molecule type" value="Genomic_DNA"/>
</dbReference>
<dbReference type="RefSeq" id="WP_000271409.1">
    <property type="nucleotide sequence ID" value="NZ_CP053098.1"/>
</dbReference>
<dbReference type="SMR" id="A3M8A0"/>
<dbReference type="GeneID" id="92895006"/>
<dbReference type="KEGG" id="acb:A1S_2731"/>
<dbReference type="HOGENOM" id="CLU_061463_3_2_6"/>
<dbReference type="GO" id="GO:0005737">
    <property type="term" value="C:cytoplasm"/>
    <property type="evidence" value="ECO:0007669"/>
    <property type="project" value="UniProtKB-ARBA"/>
</dbReference>
<dbReference type="GO" id="GO:1990904">
    <property type="term" value="C:ribonucleoprotein complex"/>
    <property type="evidence" value="ECO:0007669"/>
    <property type="project" value="UniProtKB-KW"/>
</dbReference>
<dbReference type="GO" id="GO:0005840">
    <property type="term" value="C:ribosome"/>
    <property type="evidence" value="ECO:0007669"/>
    <property type="project" value="UniProtKB-KW"/>
</dbReference>
<dbReference type="GO" id="GO:0019843">
    <property type="term" value="F:rRNA binding"/>
    <property type="evidence" value="ECO:0007669"/>
    <property type="project" value="UniProtKB-UniRule"/>
</dbReference>
<dbReference type="GO" id="GO:0003735">
    <property type="term" value="F:structural constituent of ribosome"/>
    <property type="evidence" value="ECO:0007669"/>
    <property type="project" value="InterPro"/>
</dbReference>
<dbReference type="GO" id="GO:0006412">
    <property type="term" value="P:translation"/>
    <property type="evidence" value="ECO:0007669"/>
    <property type="project" value="UniProtKB-UniRule"/>
</dbReference>
<dbReference type="HAMAP" id="MF_01363">
    <property type="entry name" value="Ribosomal_bL21"/>
    <property type="match status" value="1"/>
</dbReference>
<dbReference type="InterPro" id="IPR028909">
    <property type="entry name" value="bL21-like"/>
</dbReference>
<dbReference type="InterPro" id="IPR036164">
    <property type="entry name" value="bL21-like_sf"/>
</dbReference>
<dbReference type="InterPro" id="IPR001787">
    <property type="entry name" value="Ribosomal_bL21"/>
</dbReference>
<dbReference type="InterPro" id="IPR018258">
    <property type="entry name" value="Ribosomal_bL21_CS"/>
</dbReference>
<dbReference type="NCBIfam" id="TIGR00061">
    <property type="entry name" value="L21"/>
    <property type="match status" value="1"/>
</dbReference>
<dbReference type="PANTHER" id="PTHR21349">
    <property type="entry name" value="50S RIBOSOMAL PROTEIN L21"/>
    <property type="match status" value="1"/>
</dbReference>
<dbReference type="PANTHER" id="PTHR21349:SF0">
    <property type="entry name" value="LARGE RIBOSOMAL SUBUNIT PROTEIN BL21M"/>
    <property type="match status" value="1"/>
</dbReference>
<dbReference type="Pfam" id="PF00829">
    <property type="entry name" value="Ribosomal_L21p"/>
    <property type="match status" value="1"/>
</dbReference>
<dbReference type="SUPFAM" id="SSF141091">
    <property type="entry name" value="L21p-like"/>
    <property type="match status" value="1"/>
</dbReference>
<dbReference type="PROSITE" id="PS01169">
    <property type="entry name" value="RIBOSOMAL_L21"/>
    <property type="match status" value="1"/>
</dbReference>
<comment type="function">
    <text evidence="1">This protein binds to 23S rRNA in the presence of protein L20.</text>
</comment>
<comment type="subunit">
    <text evidence="1">Part of the 50S ribosomal subunit. Contacts protein L20.</text>
</comment>
<comment type="similarity">
    <text evidence="1">Belongs to the bacterial ribosomal protein bL21 family.</text>
</comment>
<reference key="1">
    <citation type="journal article" date="2007" name="Genes Dev.">
        <title>New insights into Acinetobacter baumannii pathogenesis revealed by high-density pyrosequencing and transposon mutagenesis.</title>
        <authorList>
            <person name="Smith M.G."/>
            <person name="Gianoulis T.A."/>
            <person name="Pukatzki S."/>
            <person name="Mekalanos J.J."/>
            <person name="Ornston L.N."/>
            <person name="Gerstein M."/>
            <person name="Snyder M."/>
        </authorList>
    </citation>
    <scope>NUCLEOTIDE SEQUENCE [LARGE SCALE GENOMIC DNA]</scope>
    <source>
        <strain>ATCC 17978 / DSM 105126 / CIP 53.77 / LMG 1025 / NCDC KC755 / 5377</strain>
    </source>
</reference>
<organism>
    <name type="scientific">Acinetobacter baumannii (strain ATCC 17978 / DSM 105126 / CIP 53.77 / LMG 1025 / NCDC KC755 / 5377)</name>
    <dbReference type="NCBI Taxonomy" id="400667"/>
    <lineage>
        <taxon>Bacteria</taxon>
        <taxon>Pseudomonadati</taxon>
        <taxon>Pseudomonadota</taxon>
        <taxon>Gammaproteobacteria</taxon>
        <taxon>Moraxellales</taxon>
        <taxon>Moraxellaceae</taxon>
        <taxon>Acinetobacter</taxon>
        <taxon>Acinetobacter calcoaceticus/baumannii complex</taxon>
    </lineage>
</organism>
<proteinExistence type="inferred from homology"/>
<keyword id="KW-0687">Ribonucleoprotein</keyword>
<keyword id="KW-0689">Ribosomal protein</keyword>
<keyword id="KW-0694">RNA-binding</keyword>
<keyword id="KW-0699">rRNA-binding</keyword>
<sequence>MYAVIQSGGKQHRVVEGETLKVELLKAESGATITFDDVLMVVNGDNIQIGAPVVAGAKVTAEVIGHGRHDKIRIIKMRRRKHYRKQQGHRQWFTELKITGISG</sequence>
<evidence type="ECO:0000255" key="1">
    <source>
        <dbReference type="HAMAP-Rule" id="MF_01363"/>
    </source>
</evidence>
<evidence type="ECO:0000305" key="2"/>
<accession>A3M8A0</accession>